<keyword id="KW-0002">3D-structure</keyword>
<keyword id="KW-1185">Reference proteome</keyword>
<keyword id="KW-0687">Ribonucleoprotein</keyword>
<keyword id="KW-0689">Ribosomal protein</keyword>
<keyword id="KW-0694">RNA-binding</keyword>
<keyword id="KW-0699">rRNA-binding</keyword>
<keyword id="KW-0820">tRNA-binding</keyword>
<feature type="chain" id="PRO_0000251675" description="Large ribosomal subunit protein uL16">
    <location>
        <begin position="1"/>
        <end position="144"/>
    </location>
</feature>
<feature type="region of interest" description="Disordered" evidence="2">
    <location>
        <begin position="1"/>
        <end position="23"/>
    </location>
</feature>
<feature type="compositionally biased region" description="Basic residues" evidence="2">
    <location>
        <begin position="1"/>
        <end position="19"/>
    </location>
</feature>
<feature type="strand" evidence="4">
    <location>
        <begin position="29"/>
        <end position="36"/>
    </location>
</feature>
<feature type="strand" evidence="4">
    <location>
        <begin position="40"/>
        <end position="42"/>
    </location>
</feature>
<feature type="helix" evidence="4">
    <location>
        <begin position="45"/>
        <end position="57"/>
    </location>
</feature>
<feature type="turn" evidence="4">
    <location>
        <begin position="58"/>
        <end position="60"/>
    </location>
</feature>
<feature type="strand" evidence="4">
    <location>
        <begin position="62"/>
        <end position="66"/>
    </location>
</feature>
<feature type="strand" evidence="4">
    <location>
        <begin position="72"/>
        <end position="76"/>
    </location>
</feature>
<feature type="strand" evidence="4">
    <location>
        <begin position="89"/>
        <end position="97"/>
    </location>
</feature>
<feature type="strand" evidence="4">
    <location>
        <begin position="102"/>
        <end position="109"/>
    </location>
</feature>
<feature type="helix" evidence="4">
    <location>
        <begin position="111"/>
        <end position="122"/>
    </location>
</feature>
<feature type="strand" evidence="4">
    <location>
        <begin position="125"/>
        <end position="127"/>
    </location>
</feature>
<feature type="strand" evidence="4">
    <location>
        <begin position="129"/>
        <end position="133"/>
    </location>
</feature>
<organism>
    <name type="scientific">Staphylococcus aureus (strain NCTC 8325 / PS 47)</name>
    <dbReference type="NCBI Taxonomy" id="93061"/>
    <lineage>
        <taxon>Bacteria</taxon>
        <taxon>Bacillati</taxon>
        <taxon>Bacillota</taxon>
        <taxon>Bacilli</taxon>
        <taxon>Bacillales</taxon>
        <taxon>Staphylococcaceae</taxon>
        <taxon>Staphylococcus</taxon>
    </lineage>
</organism>
<evidence type="ECO:0000255" key="1">
    <source>
        <dbReference type="HAMAP-Rule" id="MF_01342"/>
    </source>
</evidence>
<evidence type="ECO:0000256" key="2">
    <source>
        <dbReference type="SAM" id="MobiDB-lite"/>
    </source>
</evidence>
<evidence type="ECO:0000305" key="3"/>
<evidence type="ECO:0007829" key="4">
    <source>
        <dbReference type="PDB" id="7ASM"/>
    </source>
</evidence>
<gene>
    <name evidence="1" type="primary">rplP</name>
    <name type="ordered locus">SAOUHSC_02505</name>
</gene>
<reference key="1">
    <citation type="book" date="2006" name="Gram positive pathogens, 2nd edition">
        <title>The Staphylococcus aureus NCTC 8325 genome.</title>
        <editorList>
            <person name="Fischetti V."/>
            <person name="Novick R."/>
            <person name="Ferretti J."/>
            <person name="Portnoy D."/>
            <person name="Rood J."/>
        </editorList>
        <authorList>
            <person name="Gillaspy A.F."/>
            <person name="Worrell V."/>
            <person name="Orvis J."/>
            <person name="Roe B.A."/>
            <person name="Dyer D.W."/>
            <person name="Iandolo J.J."/>
        </authorList>
    </citation>
    <scope>NUCLEOTIDE SEQUENCE [LARGE SCALE GENOMIC DNA]</scope>
    <source>
        <strain>NCTC 8325 / PS 47</strain>
    </source>
</reference>
<dbReference type="EMBL" id="CP000253">
    <property type="protein sequence ID" value="ABD31523.1"/>
    <property type="molecule type" value="Genomic_DNA"/>
</dbReference>
<dbReference type="RefSeq" id="WP_000926310.1">
    <property type="nucleotide sequence ID" value="NZ_LS483365.1"/>
</dbReference>
<dbReference type="RefSeq" id="YP_500972.1">
    <property type="nucleotide sequence ID" value="NC_007795.1"/>
</dbReference>
<dbReference type="PDB" id="4WCE">
    <property type="method" value="X-ray"/>
    <property type="resolution" value="3.53 A"/>
    <property type="chains" value="J=1-144"/>
</dbReference>
<dbReference type="PDB" id="4WF9">
    <property type="method" value="X-ray"/>
    <property type="resolution" value="3.43 A"/>
    <property type="chains" value="J=1-144"/>
</dbReference>
<dbReference type="PDB" id="4WFA">
    <property type="method" value="X-ray"/>
    <property type="resolution" value="3.39 A"/>
    <property type="chains" value="J=1-144"/>
</dbReference>
<dbReference type="PDB" id="4WFB">
    <property type="method" value="X-ray"/>
    <property type="resolution" value="3.43 A"/>
    <property type="chains" value="J=1-144"/>
</dbReference>
<dbReference type="PDB" id="5HKV">
    <property type="method" value="X-ray"/>
    <property type="resolution" value="3.66 A"/>
    <property type="chains" value="J=1-144"/>
</dbReference>
<dbReference type="PDB" id="5HL7">
    <property type="method" value="X-ray"/>
    <property type="resolution" value="3.55 A"/>
    <property type="chains" value="J=1-144"/>
</dbReference>
<dbReference type="PDB" id="5LI0">
    <property type="method" value="EM"/>
    <property type="resolution" value="3.80 A"/>
    <property type="chains" value="P=1-141"/>
</dbReference>
<dbReference type="PDB" id="5ND8">
    <property type="method" value="EM"/>
    <property type="resolution" value="3.70 A"/>
    <property type="chains" value="P=1-144"/>
</dbReference>
<dbReference type="PDB" id="5ND9">
    <property type="method" value="EM"/>
    <property type="resolution" value="3.70 A"/>
    <property type="chains" value="P=1-144"/>
</dbReference>
<dbReference type="PDB" id="5NRG">
    <property type="method" value="X-ray"/>
    <property type="resolution" value="3.44 A"/>
    <property type="chains" value="J=1-144"/>
</dbReference>
<dbReference type="PDB" id="5TCU">
    <property type="method" value="EM"/>
    <property type="resolution" value="3.90 A"/>
    <property type="chains" value="LP=1-136"/>
</dbReference>
<dbReference type="PDB" id="6DDD">
    <property type="method" value="EM"/>
    <property type="resolution" value="3.10 A"/>
    <property type="chains" value="Y=1-144"/>
</dbReference>
<dbReference type="PDB" id="6DDG">
    <property type="method" value="EM"/>
    <property type="resolution" value="3.10 A"/>
    <property type="chains" value="Y=1-144"/>
</dbReference>
<dbReference type="PDB" id="6HMA">
    <property type="method" value="EM"/>
    <property type="resolution" value="2.65 A"/>
    <property type="chains" value="K=1-137"/>
</dbReference>
<dbReference type="PDB" id="6SJ6">
    <property type="method" value="EM"/>
    <property type="resolution" value="3.23 A"/>
    <property type="chains" value="P=1-144"/>
</dbReference>
<dbReference type="PDB" id="6WQN">
    <property type="method" value="EM"/>
    <property type="resolution" value="2.90 A"/>
    <property type="chains" value="Y=1-144"/>
</dbReference>
<dbReference type="PDB" id="6WQQ">
    <property type="method" value="EM"/>
    <property type="resolution" value="3.10 A"/>
    <property type="chains" value="Y=1-144"/>
</dbReference>
<dbReference type="PDB" id="6WRS">
    <property type="method" value="EM"/>
    <property type="resolution" value="3.20 A"/>
    <property type="chains" value="Y=1-144"/>
</dbReference>
<dbReference type="PDB" id="6WRU">
    <property type="method" value="EM"/>
    <property type="resolution" value="3.10 A"/>
    <property type="chains" value="Y=1-144"/>
</dbReference>
<dbReference type="PDB" id="6YEF">
    <property type="method" value="EM"/>
    <property type="resolution" value="3.20 A"/>
    <property type="chains" value="P=1-144"/>
</dbReference>
<dbReference type="PDB" id="7ASM">
    <property type="method" value="EM"/>
    <property type="resolution" value="2.48 A"/>
    <property type="chains" value="K=1-137"/>
</dbReference>
<dbReference type="PDB" id="7ASN">
    <property type="method" value="EM"/>
    <property type="resolution" value="2.73 A"/>
    <property type="chains" value="Y=1-137"/>
</dbReference>
<dbReference type="PDB" id="7NHL">
    <property type="method" value="EM"/>
    <property type="resolution" value="3.10 A"/>
    <property type="chains" value="P=1-144"/>
</dbReference>
<dbReference type="PDB" id="7NHM">
    <property type="method" value="EM"/>
    <property type="resolution" value="3.10 A"/>
    <property type="chains" value="P=1-144"/>
</dbReference>
<dbReference type="PDB" id="7TTU">
    <property type="method" value="EM"/>
    <property type="resolution" value="3.00 A"/>
    <property type="chains" value="Y=1-144"/>
</dbReference>
<dbReference type="PDB" id="7TTW">
    <property type="method" value="EM"/>
    <property type="resolution" value="2.90 A"/>
    <property type="chains" value="Y=1-144"/>
</dbReference>
<dbReference type="PDB" id="8P2F">
    <property type="method" value="EM"/>
    <property type="resolution" value="2.44 A"/>
    <property type="chains" value="P=1-144"/>
</dbReference>
<dbReference type="PDB" id="8P2G">
    <property type="method" value="EM"/>
    <property type="resolution" value="2.02 A"/>
    <property type="chains" value="P=1-144"/>
</dbReference>
<dbReference type="PDB" id="8P2H">
    <property type="method" value="EM"/>
    <property type="resolution" value="2.49 A"/>
    <property type="chains" value="P=1-144"/>
</dbReference>
<dbReference type="PDBsum" id="4WCE"/>
<dbReference type="PDBsum" id="4WF9"/>
<dbReference type="PDBsum" id="4WFA"/>
<dbReference type="PDBsum" id="4WFB"/>
<dbReference type="PDBsum" id="5HKV"/>
<dbReference type="PDBsum" id="5HL7"/>
<dbReference type="PDBsum" id="5LI0"/>
<dbReference type="PDBsum" id="5ND8"/>
<dbReference type="PDBsum" id="5ND9"/>
<dbReference type="PDBsum" id="5NRG"/>
<dbReference type="PDBsum" id="5TCU"/>
<dbReference type="PDBsum" id="6DDD"/>
<dbReference type="PDBsum" id="6DDG"/>
<dbReference type="PDBsum" id="6HMA"/>
<dbReference type="PDBsum" id="6SJ6"/>
<dbReference type="PDBsum" id="6WQN"/>
<dbReference type="PDBsum" id="6WQQ"/>
<dbReference type="PDBsum" id="6WRS"/>
<dbReference type="PDBsum" id="6WRU"/>
<dbReference type="PDBsum" id="6YEF"/>
<dbReference type="PDBsum" id="7ASM"/>
<dbReference type="PDBsum" id="7ASN"/>
<dbReference type="PDBsum" id="7NHL"/>
<dbReference type="PDBsum" id="7NHM"/>
<dbReference type="PDBsum" id="7TTU"/>
<dbReference type="PDBsum" id="7TTW"/>
<dbReference type="PDBsum" id="8P2F"/>
<dbReference type="PDBsum" id="8P2G"/>
<dbReference type="PDBsum" id="8P2H"/>
<dbReference type="EMDB" id="EMD-10212"/>
<dbReference type="EMDB" id="EMD-10791"/>
<dbReference type="EMDB" id="EMD-12332"/>
<dbReference type="EMDB" id="EMD-12333"/>
<dbReference type="EMDB" id="EMD-17363"/>
<dbReference type="EMDB" id="EMD-17364"/>
<dbReference type="EMDB" id="EMD-17365"/>
<dbReference type="EMDB" id="EMD-3624"/>
<dbReference type="EMDB" id="EMD-3625"/>
<dbReference type="EMDB" id="EMD-4050"/>
<dbReference type="EMDB" id="EMD-8402"/>
<dbReference type="SMR" id="Q2FW13"/>
<dbReference type="IntAct" id="Q2FW13">
    <property type="interactions" value="1"/>
</dbReference>
<dbReference type="STRING" id="93061.SAOUHSC_02505"/>
<dbReference type="PaxDb" id="1280-SAXN108_2492"/>
<dbReference type="GeneID" id="3920881"/>
<dbReference type="GeneID" id="98346555"/>
<dbReference type="KEGG" id="sao:SAOUHSC_02505"/>
<dbReference type="PATRIC" id="fig|93061.5.peg.2260"/>
<dbReference type="eggNOG" id="COG0197">
    <property type="taxonomic scope" value="Bacteria"/>
</dbReference>
<dbReference type="HOGENOM" id="CLU_078858_2_1_9"/>
<dbReference type="OrthoDB" id="9802589at2"/>
<dbReference type="EvolutionaryTrace" id="Q2FW13"/>
<dbReference type="PRO" id="PR:Q2FW13"/>
<dbReference type="Proteomes" id="UP000008816">
    <property type="component" value="Chromosome"/>
</dbReference>
<dbReference type="GO" id="GO:0022625">
    <property type="term" value="C:cytosolic large ribosomal subunit"/>
    <property type="evidence" value="ECO:0000318"/>
    <property type="project" value="GO_Central"/>
</dbReference>
<dbReference type="GO" id="GO:0019843">
    <property type="term" value="F:rRNA binding"/>
    <property type="evidence" value="ECO:0000318"/>
    <property type="project" value="GO_Central"/>
</dbReference>
<dbReference type="GO" id="GO:0003735">
    <property type="term" value="F:structural constituent of ribosome"/>
    <property type="evidence" value="ECO:0000318"/>
    <property type="project" value="GO_Central"/>
</dbReference>
<dbReference type="GO" id="GO:0000049">
    <property type="term" value="F:tRNA binding"/>
    <property type="evidence" value="ECO:0007669"/>
    <property type="project" value="UniProtKB-KW"/>
</dbReference>
<dbReference type="GO" id="GO:0006412">
    <property type="term" value="P:translation"/>
    <property type="evidence" value="ECO:0007669"/>
    <property type="project" value="UniProtKB-UniRule"/>
</dbReference>
<dbReference type="CDD" id="cd01433">
    <property type="entry name" value="Ribosomal_L16_L10e"/>
    <property type="match status" value="1"/>
</dbReference>
<dbReference type="FunFam" id="3.90.1170.10:FF:000001">
    <property type="entry name" value="50S ribosomal protein L16"/>
    <property type="match status" value="1"/>
</dbReference>
<dbReference type="Gene3D" id="3.90.1170.10">
    <property type="entry name" value="Ribosomal protein L10e/L16"/>
    <property type="match status" value="1"/>
</dbReference>
<dbReference type="HAMAP" id="MF_01342">
    <property type="entry name" value="Ribosomal_uL16"/>
    <property type="match status" value="1"/>
</dbReference>
<dbReference type="InterPro" id="IPR047873">
    <property type="entry name" value="Ribosomal_uL16"/>
</dbReference>
<dbReference type="InterPro" id="IPR000114">
    <property type="entry name" value="Ribosomal_uL16_bact-type"/>
</dbReference>
<dbReference type="InterPro" id="IPR020798">
    <property type="entry name" value="Ribosomal_uL16_CS"/>
</dbReference>
<dbReference type="InterPro" id="IPR016180">
    <property type="entry name" value="Ribosomal_uL16_dom"/>
</dbReference>
<dbReference type="InterPro" id="IPR036920">
    <property type="entry name" value="Ribosomal_uL16_sf"/>
</dbReference>
<dbReference type="NCBIfam" id="TIGR01164">
    <property type="entry name" value="rplP_bact"/>
    <property type="match status" value="1"/>
</dbReference>
<dbReference type="PANTHER" id="PTHR12220">
    <property type="entry name" value="50S/60S RIBOSOMAL PROTEIN L16"/>
    <property type="match status" value="1"/>
</dbReference>
<dbReference type="PANTHER" id="PTHR12220:SF13">
    <property type="entry name" value="LARGE RIBOSOMAL SUBUNIT PROTEIN UL16M"/>
    <property type="match status" value="1"/>
</dbReference>
<dbReference type="Pfam" id="PF00252">
    <property type="entry name" value="Ribosomal_L16"/>
    <property type="match status" value="1"/>
</dbReference>
<dbReference type="PRINTS" id="PR00060">
    <property type="entry name" value="RIBOSOMALL16"/>
</dbReference>
<dbReference type="SUPFAM" id="SSF54686">
    <property type="entry name" value="Ribosomal protein L16p/L10e"/>
    <property type="match status" value="1"/>
</dbReference>
<dbReference type="PROSITE" id="PS00586">
    <property type="entry name" value="RIBOSOMAL_L16_1"/>
    <property type="match status" value="1"/>
</dbReference>
<dbReference type="PROSITE" id="PS00701">
    <property type="entry name" value="RIBOSOMAL_L16_2"/>
    <property type="match status" value="1"/>
</dbReference>
<protein>
    <recommendedName>
        <fullName evidence="1">Large ribosomal subunit protein uL16</fullName>
    </recommendedName>
    <alternativeName>
        <fullName evidence="3">50S ribosomal protein L16</fullName>
    </alternativeName>
</protein>
<proteinExistence type="evidence at protein level"/>
<sequence>MLLPKRVKYRRQHRPKTTGRSKGGNYVTFGEFGLQATTTSWITSRQIESARIAMTRYMKRGGKVWIKIFPHTPYTKKPLEVRMGAGKGAVEGWIAVVKPGRILFEVAGVSEEVAREALRLASHKLPVKTKFVKREELGGETNES</sequence>
<comment type="function">
    <text evidence="1">Binds 23S rRNA and is also seen to make contacts with the A and possibly P site tRNAs.</text>
</comment>
<comment type="subunit">
    <text evidence="1">Part of the 50S ribosomal subunit.</text>
</comment>
<comment type="similarity">
    <text evidence="1">Belongs to the universal ribosomal protein uL16 family.</text>
</comment>
<accession>Q2FW13</accession>
<name>RL16_STAA8</name>